<evidence type="ECO:0000255" key="1">
    <source>
        <dbReference type="HAMAP-Rule" id="MF_00379"/>
    </source>
</evidence>
<comment type="function">
    <text evidence="1">Exhibits a very high intrinsic GTPase hydrolysis rate. Involved in the addition of a carboxymethylaminomethyl (cmnm) group at the wobble position (U34) of certain tRNAs, forming tRNA-cmnm(5)s(2)U34.</text>
</comment>
<comment type="cofactor">
    <cofactor evidence="1">
        <name>K(+)</name>
        <dbReference type="ChEBI" id="CHEBI:29103"/>
    </cofactor>
    <text evidence="1">Binds 1 potassium ion per subunit.</text>
</comment>
<comment type="subunit">
    <text evidence="1">Homodimer. Heterotetramer of two MnmE and two MnmG subunits.</text>
</comment>
<comment type="subcellular location">
    <subcellularLocation>
        <location evidence="1">Cytoplasm</location>
    </subcellularLocation>
</comment>
<comment type="similarity">
    <text evidence="1">Belongs to the TRAFAC class TrmE-Era-EngA-EngB-Septin-like GTPase superfamily. TrmE GTPase family.</text>
</comment>
<keyword id="KW-0963">Cytoplasm</keyword>
<keyword id="KW-0342">GTP-binding</keyword>
<keyword id="KW-0378">Hydrolase</keyword>
<keyword id="KW-0460">Magnesium</keyword>
<keyword id="KW-0479">Metal-binding</keyword>
<keyword id="KW-0547">Nucleotide-binding</keyword>
<keyword id="KW-0630">Potassium</keyword>
<keyword id="KW-0819">tRNA processing</keyword>
<reference key="1">
    <citation type="journal article" date="2005" name="J. Bacteriol.">
        <title>Swine and poultry pathogens: the complete genome sequences of two strains of Mycoplasma hyopneumoniae and a strain of Mycoplasma synoviae.</title>
        <authorList>
            <person name="Vasconcelos A.T.R."/>
            <person name="Ferreira H.B."/>
            <person name="Bizarro C.V."/>
            <person name="Bonatto S.L."/>
            <person name="Carvalho M.O."/>
            <person name="Pinto P.M."/>
            <person name="Almeida D.F."/>
            <person name="Almeida L.G.P."/>
            <person name="Almeida R."/>
            <person name="Alves-Junior L."/>
            <person name="Assuncao E.N."/>
            <person name="Azevedo V.A.C."/>
            <person name="Bogo M.R."/>
            <person name="Brigido M.M."/>
            <person name="Brocchi M."/>
            <person name="Burity H.A."/>
            <person name="Camargo A.A."/>
            <person name="Camargo S.S."/>
            <person name="Carepo M.S."/>
            <person name="Carraro D.M."/>
            <person name="de Mattos Cascardo J.C."/>
            <person name="Castro L.A."/>
            <person name="Cavalcanti G."/>
            <person name="Chemale G."/>
            <person name="Collevatti R.G."/>
            <person name="Cunha C.W."/>
            <person name="Dallagiovanna B."/>
            <person name="Dambros B.P."/>
            <person name="Dellagostin O.A."/>
            <person name="Falcao C."/>
            <person name="Fantinatti-Garboggini F."/>
            <person name="Felipe M.S.S."/>
            <person name="Fiorentin L."/>
            <person name="Franco G.R."/>
            <person name="Freitas N.S.A."/>
            <person name="Frias D."/>
            <person name="Grangeiro T.B."/>
            <person name="Grisard E.C."/>
            <person name="Guimaraes C.T."/>
            <person name="Hungria M."/>
            <person name="Jardim S.N."/>
            <person name="Krieger M.A."/>
            <person name="Laurino J.P."/>
            <person name="Lima L.F.A."/>
            <person name="Lopes M.I."/>
            <person name="Loreto E.L.S."/>
            <person name="Madeira H.M.F."/>
            <person name="Manfio G.P."/>
            <person name="Maranhao A.Q."/>
            <person name="Martinkovics C.T."/>
            <person name="Medeiros S.R.B."/>
            <person name="Moreira M.A.M."/>
            <person name="Neiva M."/>
            <person name="Ramalho-Neto C.E."/>
            <person name="Nicolas M.F."/>
            <person name="Oliveira S.C."/>
            <person name="Paixao R.F.C."/>
            <person name="Pedrosa F.O."/>
            <person name="Pena S.D.J."/>
            <person name="Pereira M."/>
            <person name="Pereira-Ferrari L."/>
            <person name="Piffer I."/>
            <person name="Pinto L.S."/>
            <person name="Potrich D.P."/>
            <person name="Salim A.C.M."/>
            <person name="Santos F.R."/>
            <person name="Schmitt R."/>
            <person name="Schneider M.P.C."/>
            <person name="Schrank A."/>
            <person name="Schrank I.S."/>
            <person name="Schuck A.F."/>
            <person name="Seuanez H.N."/>
            <person name="Silva D.W."/>
            <person name="Silva R."/>
            <person name="Silva S.C."/>
            <person name="Soares C.M.A."/>
            <person name="Souza K.R.L."/>
            <person name="Souza R.C."/>
            <person name="Staats C.C."/>
            <person name="Steffens M.B.R."/>
            <person name="Teixeira S.M.R."/>
            <person name="Urmenyi T.P."/>
            <person name="Vainstein M.H."/>
            <person name="Zuccherato L.W."/>
            <person name="Simpson A.J.G."/>
            <person name="Zaha A."/>
        </authorList>
    </citation>
    <scope>NUCLEOTIDE SEQUENCE [LARGE SCALE GENOMIC DNA]</scope>
    <source>
        <strain>7448</strain>
    </source>
</reference>
<accession>Q4A8F6</accession>
<feature type="chain" id="PRO_0000345840" description="tRNA modification GTPase MnmE">
    <location>
        <begin position="1"/>
        <end position="442"/>
    </location>
</feature>
<feature type="domain" description="TrmE-type G">
    <location>
        <begin position="216"/>
        <end position="366"/>
    </location>
</feature>
<feature type="binding site" evidence="1">
    <location>
        <position position="22"/>
    </location>
    <ligand>
        <name>(6S)-5-formyl-5,6,7,8-tetrahydrofolate</name>
        <dbReference type="ChEBI" id="CHEBI:57457"/>
    </ligand>
</feature>
<feature type="binding site" evidence="1">
    <location>
        <position position="79"/>
    </location>
    <ligand>
        <name>(6S)-5-formyl-5,6,7,8-tetrahydrofolate</name>
        <dbReference type="ChEBI" id="CHEBI:57457"/>
    </ligand>
</feature>
<feature type="binding site" evidence="1">
    <location>
        <position position="119"/>
    </location>
    <ligand>
        <name>(6S)-5-formyl-5,6,7,8-tetrahydrofolate</name>
        <dbReference type="ChEBI" id="CHEBI:57457"/>
    </ligand>
</feature>
<feature type="binding site" evidence="1">
    <location>
        <begin position="226"/>
        <end position="231"/>
    </location>
    <ligand>
        <name>GTP</name>
        <dbReference type="ChEBI" id="CHEBI:37565"/>
    </ligand>
</feature>
<feature type="binding site" evidence="1">
    <location>
        <position position="226"/>
    </location>
    <ligand>
        <name>K(+)</name>
        <dbReference type="ChEBI" id="CHEBI:29103"/>
    </ligand>
</feature>
<feature type="binding site" evidence="1">
    <location>
        <position position="230"/>
    </location>
    <ligand>
        <name>Mg(2+)</name>
        <dbReference type="ChEBI" id="CHEBI:18420"/>
    </ligand>
</feature>
<feature type="binding site" evidence="1">
    <location>
        <begin position="245"/>
        <end position="251"/>
    </location>
    <ligand>
        <name>GTP</name>
        <dbReference type="ChEBI" id="CHEBI:37565"/>
    </ligand>
</feature>
<feature type="binding site" evidence="1">
    <location>
        <position position="245"/>
    </location>
    <ligand>
        <name>K(+)</name>
        <dbReference type="ChEBI" id="CHEBI:29103"/>
    </ligand>
</feature>
<feature type="binding site" evidence="1">
    <location>
        <position position="247"/>
    </location>
    <ligand>
        <name>K(+)</name>
        <dbReference type="ChEBI" id="CHEBI:29103"/>
    </ligand>
</feature>
<feature type="binding site" evidence="1">
    <location>
        <position position="250"/>
    </location>
    <ligand>
        <name>K(+)</name>
        <dbReference type="ChEBI" id="CHEBI:29103"/>
    </ligand>
</feature>
<feature type="binding site" evidence="1">
    <location>
        <position position="251"/>
    </location>
    <ligand>
        <name>Mg(2+)</name>
        <dbReference type="ChEBI" id="CHEBI:18420"/>
    </ligand>
</feature>
<feature type="binding site" evidence="1">
    <location>
        <begin position="270"/>
        <end position="273"/>
    </location>
    <ligand>
        <name>GTP</name>
        <dbReference type="ChEBI" id="CHEBI:37565"/>
    </ligand>
</feature>
<feature type="binding site" evidence="1">
    <location>
        <position position="442"/>
    </location>
    <ligand>
        <name>(6S)-5-formyl-5,6,7,8-tetrahydrofolate</name>
        <dbReference type="ChEBI" id="CHEBI:57457"/>
    </ligand>
</feature>
<sequence length="442" mass="49416">MLSDTICAIASGQINQAISIIRISGPNAFKIMEKIFLGKVGKSMEITFGWIHDDNQKIDQVLVLWFAGNKNFVGEDTVEINAHGGVLNTNLILELILKTKLARLANPGEFSLRAFLNGKIDLVKAQAINDLIHAEVKVQHQAALNQFLGKSSNFIKNLIEKIEEIIGIIEVNIDYPEYDDVEILTSDVLLPKINQLLADFDQLIKIANNSRLIYQGIKTCLVGAPNSGKSSLLNILINENKAIISEIPGTTRDVVEGNFVLDGLLFKLFDTAGIRKTTEKIEQIGIEKSYESIKKADLILHIIDASEKNRQNLDLKAKARPDQVYLKIYNKSDLLENQEEFKDEILISAKYQKIENLLEKIKSIFAFLGKNKEFVANSFQISQIELGKLAILDAKTSLESGFGPEIAIVDLRIAWKELKTIFGRVDDENLLDSIFSKFCLGK</sequence>
<gene>
    <name evidence="1" type="primary">mnmE</name>
    <name evidence="1" type="synonym">trmE</name>
    <name type="ordered locus">MHP7448_0209</name>
</gene>
<organism>
    <name type="scientific">Mesomycoplasma hyopneumoniae (strain 7448)</name>
    <name type="common">Mycoplasma hyopneumoniae</name>
    <dbReference type="NCBI Taxonomy" id="262722"/>
    <lineage>
        <taxon>Bacteria</taxon>
        <taxon>Bacillati</taxon>
        <taxon>Mycoplasmatota</taxon>
        <taxon>Mycoplasmoidales</taxon>
        <taxon>Metamycoplasmataceae</taxon>
        <taxon>Mesomycoplasma</taxon>
    </lineage>
</organism>
<protein>
    <recommendedName>
        <fullName evidence="1">tRNA modification GTPase MnmE</fullName>
        <ecNumber evidence="1">3.6.-.-</ecNumber>
    </recommendedName>
</protein>
<proteinExistence type="inferred from homology"/>
<name>MNME_MESH7</name>
<dbReference type="EC" id="3.6.-.-" evidence="1"/>
<dbReference type="EMBL" id="AE017244">
    <property type="protein sequence ID" value="AAZ53583.1"/>
    <property type="molecule type" value="Genomic_DNA"/>
</dbReference>
<dbReference type="RefSeq" id="WP_011290078.1">
    <property type="nucleotide sequence ID" value="NC_007332.1"/>
</dbReference>
<dbReference type="SMR" id="Q4A8F6"/>
<dbReference type="KEGG" id="mhp:MHP7448_0209"/>
<dbReference type="HOGENOM" id="CLU_019624_4_1_14"/>
<dbReference type="Proteomes" id="UP000000553">
    <property type="component" value="Chromosome"/>
</dbReference>
<dbReference type="GO" id="GO:0005829">
    <property type="term" value="C:cytosol"/>
    <property type="evidence" value="ECO:0007669"/>
    <property type="project" value="TreeGrafter"/>
</dbReference>
<dbReference type="GO" id="GO:0005525">
    <property type="term" value="F:GTP binding"/>
    <property type="evidence" value="ECO:0007669"/>
    <property type="project" value="UniProtKB-UniRule"/>
</dbReference>
<dbReference type="GO" id="GO:0003924">
    <property type="term" value="F:GTPase activity"/>
    <property type="evidence" value="ECO:0007669"/>
    <property type="project" value="UniProtKB-UniRule"/>
</dbReference>
<dbReference type="GO" id="GO:0046872">
    <property type="term" value="F:metal ion binding"/>
    <property type="evidence" value="ECO:0007669"/>
    <property type="project" value="UniProtKB-KW"/>
</dbReference>
<dbReference type="GO" id="GO:0030488">
    <property type="term" value="P:tRNA methylation"/>
    <property type="evidence" value="ECO:0007669"/>
    <property type="project" value="TreeGrafter"/>
</dbReference>
<dbReference type="GO" id="GO:0002098">
    <property type="term" value="P:tRNA wobble uridine modification"/>
    <property type="evidence" value="ECO:0007669"/>
    <property type="project" value="TreeGrafter"/>
</dbReference>
<dbReference type="CDD" id="cd04164">
    <property type="entry name" value="trmE"/>
    <property type="match status" value="1"/>
</dbReference>
<dbReference type="CDD" id="cd14858">
    <property type="entry name" value="TrmE_N"/>
    <property type="match status" value="1"/>
</dbReference>
<dbReference type="Gene3D" id="3.40.50.300">
    <property type="entry name" value="P-loop containing nucleotide triphosphate hydrolases"/>
    <property type="match status" value="1"/>
</dbReference>
<dbReference type="Gene3D" id="3.30.1360.120">
    <property type="entry name" value="Probable tRNA modification gtpase trme, domain 1"/>
    <property type="match status" value="1"/>
</dbReference>
<dbReference type="Gene3D" id="1.20.120.430">
    <property type="entry name" value="tRNA modification GTPase MnmE domain 2"/>
    <property type="match status" value="1"/>
</dbReference>
<dbReference type="HAMAP" id="MF_00379">
    <property type="entry name" value="GTPase_MnmE"/>
    <property type="match status" value="1"/>
</dbReference>
<dbReference type="InterPro" id="IPR031168">
    <property type="entry name" value="G_TrmE"/>
</dbReference>
<dbReference type="InterPro" id="IPR006073">
    <property type="entry name" value="GTP-bd"/>
</dbReference>
<dbReference type="InterPro" id="IPR018948">
    <property type="entry name" value="GTP-bd_TrmE_N"/>
</dbReference>
<dbReference type="InterPro" id="IPR004520">
    <property type="entry name" value="GTPase_MnmE"/>
</dbReference>
<dbReference type="InterPro" id="IPR027368">
    <property type="entry name" value="MnmE_dom2"/>
</dbReference>
<dbReference type="InterPro" id="IPR025867">
    <property type="entry name" value="MnmE_helical"/>
</dbReference>
<dbReference type="InterPro" id="IPR027417">
    <property type="entry name" value="P-loop_NTPase"/>
</dbReference>
<dbReference type="InterPro" id="IPR005225">
    <property type="entry name" value="Small_GTP-bd"/>
</dbReference>
<dbReference type="InterPro" id="IPR027266">
    <property type="entry name" value="TrmE/GcvT_dom1"/>
</dbReference>
<dbReference type="NCBIfam" id="TIGR00450">
    <property type="entry name" value="mnmE_trmE_thdF"/>
    <property type="match status" value="1"/>
</dbReference>
<dbReference type="NCBIfam" id="TIGR00231">
    <property type="entry name" value="small_GTP"/>
    <property type="match status" value="1"/>
</dbReference>
<dbReference type="PANTHER" id="PTHR42714">
    <property type="entry name" value="TRNA MODIFICATION GTPASE GTPBP3"/>
    <property type="match status" value="1"/>
</dbReference>
<dbReference type="PANTHER" id="PTHR42714:SF2">
    <property type="entry name" value="TRNA MODIFICATION GTPASE GTPBP3, MITOCHONDRIAL"/>
    <property type="match status" value="1"/>
</dbReference>
<dbReference type="Pfam" id="PF01926">
    <property type="entry name" value="MMR_HSR1"/>
    <property type="match status" value="1"/>
</dbReference>
<dbReference type="Pfam" id="PF12631">
    <property type="entry name" value="MnmE_helical"/>
    <property type="match status" value="1"/>
</dbReference>
<dbReference type="Pfam" id="PF10396">
    <property type="entry name" value="TrmE_N"/>
    <property type="match status" value="1"/>
</dbReference>
<dbReference type="PRINTS" id="PR00326">
    <property type="entry name" value="GTP1OBG"/>
</dbReference>
<dbReference type="SUPFAM" id="SSF103025">
    <property type="entry name" value="Folate-binding domain"/>
    <property type="match status" value="1"/>
</dbReference>
<dbReference type="SUPFAM" id="SSF52540">
    <property type="entry name" value="P-loop containing nucleoside triphosphate hydrolases"/>
    <property type="match status" value="1"/>
</dbReference>
<dbReference type="SUPFAM" id="SSF116878">
    <property type="entry name" value="TrmE connector domain"/>
    <property type="match status" value="1"/>
</dbReference>
<dbReference type="PROSITE" id="PS51709">
    <property type="entry name" value="G_TRME"/>
    <property type="match status" value="1"/>
</dbReference>